<reference key="1">
    <citation type="journal article" date="2008" name="J. Bacteriol.">
        <title>The complete genome sequence of Actinobacillus pleuropneumoniae L20 (serotype 5b).</title>
        <authorList>
            <person name="Foote S.J."/>
            <person name="Bosse J.T."/>
            <person name="Bouevitch A.B."/>
            <person name="Langford P.R."/>
            <person name="Young N.M."/>
            <person name="Nash J.H.E."/>
        </authorList>
    </citation>
    <scope>NUCLEOTIDE SEQUENCE [LARGE SCALE GENOMIC DNA]</scope>
    <source>
        <strain>L20</strain>
    </source>
</reference>
<comment type="function">
    <text evidence="1">NQR complex catalyzes the reduction of ubiquinone-1 to ubiquinol by two successive reactions, coupled with the transport of Na(+) ions from the cytoplasm to the periplasm. NqrA to NqrE are probably involved in the second step, the conversion of ubisemiquinone to ubiquinol.</text>
</comment>
<comment type="catalytic activity">
    <reaction evidence="1">
        <text>a ubiquinone + n Na(+)(in) + NADH + H(+) = a ubiquinol + n Na(+)(out) + NAD(+)</text>
        <dbReference type="Rhea" id="RHEA:47748"/>
        <dbReference type="Rhea" id="RHEA-COMP:9565"/>
        <dbReference type="Rhea" id="RHEA-COMP:9566"/>
        <dbReference type="ChEBI" id="CHEBI:15378"/>
        <dbReference type="ChEBI" id="CHEBI:16389"/>
        <dbReference type="ChEBI" id="CHEBI:17976"/>
        <dbReference type="ChEBI" id="CHEBI:29101"/>
        <dbReference type="ChEBI" id="CHEBI:57540"/>
        <dbReference type="ChEBI" id="CHEBI:57945"/>
        <dbReference type="EC" id="7.2.1.1"/>
    </reaction>
</comment>
<comment type="subunit">
    <text evidence="1">Composed of six subunits; NqrA, NqrB, NqrC, NqrD, NqrE and NqrF.</text>
</comment>
<comment type="subcellular location">
    <subcellularLocation>
        <location evidence="1">Cell inner membrane</location>
        <topology evidence="1">Multi-pass membrane protein</topology>
    </subcellularLocation>
</comment>
<comment type="similarity">
    <text evidence="1">Belongs to the NqrDE/RnfAE family.</text>
</comment>
<accession>A3MYM6</accession>
<proteinExistence type="inferred from homology"/>
<name>NQRE_ACTP2</name>
<dbReference type="EC" id="7.2.1.1" evidence="1"/>
<dbReference type="EMBL" id="CP000569">
    <property type="protein sequence ID" value="ABN73262.1"/>
    <property type="molecule type" value="Genomic_DNA"/>
</dbReference>
<dbReference type="RefSeq" id="WP_005595869.1">
    <property type="nucleotide sequence ID" value="NC_009053.1"/>
</dbReference>
<dbReference type="SMR" id="A3MYM6"/>
<dbReference type="STRING" id="416269.APL_0154"/>
<dbReference type="EnsemblBacteria" id="ABN73262">
    <property type="protein sequence ID" value="ABN73262"/>
    <property type="gene ID" value="APL_0154"/>
</dbReference>
<dbReference type="GeneID" id="48598301"/>
<dbReference type="KEGG" id="apl:APL_0154"/>
<dbReference type="eggNOG" id="COG2209">
    <property type="taxonomic scope" value="Bacteria"/>
</dbReference>
<dbReference type="HOGENOM" id="CLU_095255_0_0_6"/>
<dbReference type="Proteomes" id="UP000001432">
    <property type="component" value="Chromosome"/>
</dbReference>
<dbReference type="GO" id="GO:0009276">
    <property type="term" value="C:Gram-negative-bacterium-type cell wall"/>
    <property type="evidence" value="ECO:0007669"/>
    <property type="project" value="InterPro"/>
</dbReference>
<dbReference type="GO" id="GO:0005886">
    <property type="term" value="C:plasma membrane"/>
    <property type="evidence" value="ECO:0007669"/>
    <property type="project" value="UniProtKB-SubCell"/>
</dbReference>
<dbReference type="GO" id="GO:0016655">
    <property type="term" value="F:oxidoreductase activity, acting on NAD(P)H, quinone or similar compound as acceptor"/>
    <property type="evidence" value="ECO:0007669"/>
    <property type="project" value="UniProtKB-UniRule"/>
</dbReference>
<dbReference type="GO" id="GO:0022904">
    <property type="term" value="P:respiratory electron transport chain"/>
    <property type="evidence" value="ECO:0007669"/>
    <property type="project" value="InterPro"/>
</dbReference>
<dbReference type="GO" id="GO:0006814">
    <property type="term" value="P:sodium ion transport"/>
    <property type="evidence" value="ECO:0007669"/>
    <property type="project" value="UniProtKB-UniRule"/>
</dbReference>
<dbReference type="HAMAP" id="MF_00429">
    <property type="entry name" value="NqrE"/>
    <property type="match status" value="1"/>
</dbReference>
<dbReference type="InterPro" id="IPR003667">
    <property type="entry name" value="NqrDE/RnfAE"/>
</dbReference>
<dbReference type="InterPro" id="IPR050133">
    <property type="entry name" value="NqrDE/RnfAE_oxidrdctase"/>
</dbReference>
<dbReference type="InterPro" id="IPR010967">
    <property type="entry name" value="NqrE"/>
</dbReference>
<dbReference type="NCBIfam" id="TIGR01940">
    <property type="entry name" value="nqrE"/>
    <property type="match status" value="1"/>
</dbReference>
<dbReference type="PANTHER" id="PTHR30335">
    <property type="entry name" value="INTEGRAL MEMBRANE PROTEIN OF SOXR-REDUCING COMPLEX"/>
    <property type="match status" value="1"/>
</dbReference>
<dbReference type="PANTHER" id="PTHR30335:SF1">
    <property type="entry name" value="NA(+)-TRANSLOCATING NADH-QUINONE REDUCTASE SUBUNIT E"/>
    <property type="match status" value="1"/>
</dbReference>
<dbReference type="Pfam" id="PF02508">
    <property type="entry name" value="Rnf-Nqr"/>
    <property type="match status" value="1"/>
</dbReference>
<dbReference type="PIRSF" id="PIRSF006102">
    <property type="entry name" value="NQR_DE"/>
    <property type="match status" value="1"/>
</dbReference>
<feature type="chain" id="PRO_1000060183" description="Na(+)-translocating NADH-quinone reductase subunit E">
    <location>
        <begin position="1"/>
        <end position="198"/>
    </location>
</feature>
<feature type="transmembrane region" description="Helical" evidence="1">
    <location>
        <begin position="11"/>
        <end position="31"/>
    </location>
</feature>
<feature type="transmembrane region" description="Helical" evidence="1">
    <location>
        <begin position="35"/>
        <end position="55"/>
    </location>
</feature>
<feature type="transmembrane region" description="Helical" evidence="1">
    <location>
        <begin position="77"/>
        <end position="97"/>
    </location>
</feature>
<feature type="transmembrane region" description="Helical" evidence="1">
    <location>
        <begin position="110"/>
        <end position="130"/>
    </location>
</feature>
<feature type="transmembrane region" description="Helical" evidence="1">
    <location>
        <begin position="140"/>
        <end position="160"/>
    </location>
</feature>
<feature type="transmembrane region" description="Helical" evidence="1">
    <location>
        <begin position="176"/>
        <end position="196"/>
    </location>
</feature>
<protein>
    <recommendedName>
        <fullName evidence="1">Na(+)-translocating NADH-quinone reductase subunit E</fullName>
        <shortName evidence="1">Na(+)-NQR subunit E</shortName>
        <shortName evidence="1">Na(+)-translocating NQR subunit E</shortName>
        <ecNumber evidence="1">7.2.1.1</ecNumber>
    </recommendedName>
    <alternativeName>
        <fullName evidence="1">NQR complex subunit E</fullName>
    </alternativeName>
    <alternativeName>
        <fullName evidence="1">NQR-1 subunit E</fullName>
    </alternativeName>
</protein>
<organism>
    <name type="scientific">Actinobacillus pleuropneumoniae serotype 5b (strain L20)</name>
    <dbReference type="NCBI Taxonomy" id="416269"/>
    <lineage>
        <taxon>Bacteria</taxon>
        <taxon>Pseudomonadati</taxon>
        <taxon>Pseudomonadota</taxon>
        <taxon>Gammaproteobacteria</taxon>
        <taxon>Pasteurellales</taxon>
        <taxon>Pasteurellaceae</taxon>
        <taxon>Actinobacillus</taxon>
    </lineage>
</organism>
<evidence type="ECO:0000255" key="1">
    <source>
        <dbReference type="HAMAP-Rule" id="MF_00429"/>
    </source>
</evidence>
<gene>
    <name evidence="1" type="primary">nqrE</name>
    <name type="ordered locus">APL_0154</name>
</gene>
<keyword id="KW-0997">Cell inner membrane</keyword>
<keyword id="KW-1003">Cell membrane</keyword>
<keyword id="KW-0406">Ion transport</keyword>
<keyword id="KW-0472">Membrane</keyword>
<keyword id="KW-0520">NAD</keyword>
<keyword id="KW-1185">Reference proteome</keyword>
<keyword id="KW-0915">Sodium</keyword>
<keyword id="KW-0739">Sodium transport</keyword>
<keyword id="KW-1278">Translocase</keyword>
<keyword id="KW-0812">Transmembrane</keyword>
<keyword id="KW-1133">Transmembrane helix</keyword>
<keyword id="KW-0813">Transport</keyword>
<keyword id="KW-0830">Ubiquinone</keyword>
<sequence>MEHYLSLFVKSVFIENMALSFFLGMCTFLAVSKKVSTAFGLGIAVIVVLGIAVPANQLVYTHVLKDGALVEGVDLSFLNFITFIGVIAALVQILEMILDKFFPALYSALGIFLPLITVNCAIFGGVSFMVQREYNFTESVVYGLGAGTGWMLAIVALAGLTEKMKYSDVPAGLRGLGITFITVGLMALGFMSFSGIQL</sequence>